<organism>
    <name type="scientific">Streptococcus mutans serotype c (strain ATCC 700610 / UA159)</name>
    <dbReference type="NCBI Taxonomy" id="210007"/>
    <lineage>
        <taxon>Bacteria</taxon>
        <taxon>Bacillati</taxon>
        <taxon>Bacillota</taxon>
        <taxon>Bacilli</taxon>
        <taxon>Lactobacillales</taxon>
        <taxon>Streptococcaceae</taxon>
        <taxon>Streptococcus</taxon>
    </lineage>
</organism>
<dbReference type="EC" id="6.1.1.22" evidence="1"/>
<dbReference type="EMBL" id="AE014133">
    <property type="protein sequence ID" value="AAN58988.1"/>
    <property type="molecule type" value="Genomic_DNA"/>
</dbReference>
<dbReference type="RefSeq" id="NP_721682.1">
    <property type="nucleotide sequence ID" value="NC_004350.2"/>
</dbReference>
<dbReference type="RefSeq" id="WP_002263717.1">
    <property type="nucleotide sequence ID" value="NC_004350.2"/>
</dbReference>
<dbReference type="SMR" id="Q8DTM2"/>
<dbReference type="STRING" id="210007.SMU_1311"/>
<dbReference type="KEGG" id="smu:SMU_1311"/>
<dbReference type="PATRIC" id="fig|210007.7.peg.1175"/>
<dbReference type="eggNOG" id="COG0017">
    <property type="taxonomic scope" value="Bacteria"/>
</dbReference>
<dbReference type="HOGENOM" id="CLU_004553_2_0_9"/>
<dbReference type="OrthoDB" id="9762036at2"/>
<dbReference type="PhylomeDB" id="Q8DTM2"/>
<dbReference type="Proteomes" id="UP000002512">
    <property type="component" value="Chromosome"/>
</dbReference>
<dbReference type="GO" id="GO:0005737">
    <property type="term" value="C:cytoplasm"/>
    <property type="evidence" value="ECO:0007669"/>
    <property type="project" value="UniProtKB-SubCell"/>
</dbReference>
<dbReference type="GO" id="GO:0004816">
    <property type="term" value="F:asparagine-tRNA ligase activity"/>
    <property type="evidence" value="ECO:0007669"/>
    <property type="project" value="UniProtKB-UniRule"/>
</dbReference>
<dbReference type="GO" id="GO:0005524">
    <property type="term" value="F:ATP binding"/>
    <property type="evidence" value="ECO:0007669"/>
    <property type="project" value="UniProtKB-UniRule"/>
</dbReference>
<dbReference type="GO" id="GO:0140096">
    <property type="term" value="F:catalytic activity, acting on a protein"/>
    <property type="evidence" value="ECO:0007669"/>
    <property type="project" value="UniProtKB-ARBA"/>
</dbReference>
<dbReference type="GO" id="GO:0003676">
    <property type="term" value="F:nucleic acid binding"/>
    <property type="evidence" value="ECO:0007669"/>
    <property type="project" value="InterPro"/>
</dbReference>
<dbReference type="GO" id="GO:0016740">
    <property type="term" value="F:transferase activity"/>
    <property type="evidence" value="ECO:0007669"/>
    <property type="project" value="UniProtKB-ARBA"/>
</dbReference>
<dbReference type="GO" id="GO:0006421">
    <property type="term" value="P:asparaginyl-tRNA aminoacylation"/>
    <property type="evidence" value="ECO:0007669"/>
    <property type="project" value="UniProtKB-UniRule"/>
</dbReference>
<dbReference type="CDD" id="cd04323">
    <property type="entry name" value="AsnRS_cyto_like_N"/>
    <property type="match status" value="1"/>
</dbReference>
<dbReference type="CDD" id="cd00776">
    <property type="entry name" value="AsxRS_core"/>
    <property type="match status" value="1"/>
</dbReference>
<dbReference type="Gene3D" id="3.30.930.10">
    <property type="entry name" value="Bira Bifunctional Protein, Domain 2"/>
    <property type="match status" value="1"/>
</dbReference>
<dbReference type="Gene3D" id="2.40.50.140">
    <property type="entry name" value="Nucleic acid-binding proteins"/>
    <property type="match status" value="1"/>
</dbReference>
<dbReference type="HAMAP" id="MF_00534">
    <property type="entry name" value="Asn_tRNA_synth"/>
    <property type="match status" value="1"/>
</dbReference>
<dbReference type="InterPro" id="IPR004364">
    <property type="entry name" value="Aa-tRNA-synt_II"/>
</dbReference>
<dbReference type="InterPro" id="IPR006195">
    <property type="entry name" value="aa-tRNA-synth_II"/>
</dbReference>
<dbReference type="InterPro" id="IPR045864">
    <property type="entry name" value="aa-tRNA-synth_II/BPL/LPL"/>
</dbReference>
<dbReference type="InterPro" id="IPR004522">
    <property type="entry name" value="Asn-tRNA-ligase"/>
</dbReference>
<dbReference type="InterPro" id="IPR002312">
    <property type="entry name" value="Asp/Asn-tRNA-synth_IIb"/>
</dbReference>
<dbReference type="InterPro" id="IPR012340">
    <property type="entry name" value="NA-bd_OB-fold"/>
</dbReference>
<dbReference type="InterPro" id="IPR004365">
    <property type="entry name" value="NA-bd_OB_tRNA"/>
</dbReference>
<dbReference type="NCBIfam" id="TIGR00457">
    <property type="entry name" value="asnS"/>
    <property type="match status" value="1"/>
</dbReference>
<dbReference type="NCBIfam" id="NF003037">
    <property type="entry name" value="PRK03932.1"/>
    <property type="match status" value="1"/>
</dbReference>
<dbReference type="PANTHER" id="PTHR22594:SF34">
    <property type="entry name" value="ASPARAGINE--TRNA LIGASE, MITOCHONDRIAL-RELATED"/>
    <property type="match status" value="1"/>
</dbReference>
<dbReference type="PANTHER" id="PTHR22594">
    <property type="entry name" value="ASPARTYL/LYSYL-TRNA SYNTHETASE"/>
    <property type="match status" value="1"/>
</dbReference>
<dbReference type="Pfam" id="PF00152">
    <property type="entry name" value="tRNA-synt_2"/>
    <property type="match status" value="1"/>
</dbReference>
<dbReference type="Pfam" id="PF01336">
    <property type="entry name" value="tRNA_anti-codon"/>
    <property type="match status" value="1"/>
</dbReference>
<dbReference type="PRINTS" id="PR01042">
    <property type="entry name" value="TRNASYNTHASP"/>
</dbReference>
<dbReference type="SUPFAM" id="SSF55681">
    <property type="entry name" value="Class II aaRS and biotin synthetases"/>
    <property type="match status" value="1"/>
</dbReference>
<dbReference type="SUPFAM" id="SSF50249">
    <property type="entry name" value="Nucleic acid-binding proteins"/>
    <property type="match status" value="1"/>
</dbReference>
<dbReference type="PROSITE" id="PS50862">
    <property type="entry name" value="AA_TRNA_LIGASE_II"/>
    <property type="match status" value="1"/>
</dbReference>
<keyword id="KW-0030">Aminoacyl-tRNA synthetase</keyword>
<keyword id="KW-0067">ATP-binding</keyword>
<keyword id="KW-0963">Cytoplasm</keyword>
<keyword id="KW-0436">Ligase</keyword>
<keyword id="KW-0547">Nucleotide-binding</keyword>
<keyword id="KW-0648">Protein biosynthesis</keyword>
<keyword id="KW-1185">Reference proteome</keyword>
<gene>
    <name evidence="1" type="primary">asnS</name>
    <name type="ordered locus">SMU_1311</name>
</gene>
<reference key="1">
    <citation type="journal article" date="2002" name="Proc. Natl. Acad. Sci. U.S.A.">
        <title>Genome sequence of Streptococcus mutans UA159, a cariogenic dental pathogen.</title>
        <authorList>
            <person name="Ajdic D.J."/>
            <person name="McShan W.M."/>
            <person name="McLaughlin R.E."/>
            <person name="Savic G."/>
            <person name="Chang J."/>
            <person name="Carson M.B."/>
            <person name="Primeaux C."/>
            <person name="Tian R."/>
            <person name="Kenton S."/>
            <person name="Jia H.G."/>
            <person name="Lin S.P."/>
            <person name="Qian Y."/>
            <person name="Li S."/>
            <person name="Zhu H."/>
            <person name="Najar F.Z."/>
            <person name="Lai H."/>
            <person name="White J."/>
            <person name="Roe B.A."/>
            <person name="Ferretti J.J."/>
        </authorList>
    </citation>
    <scope>NUCLEOTIDE SEQUENCE [LARGE SCALE GENOMIC DNA]</scope>
    <source>
        <strain>ATCC 700610 / UA159</strain>
    </source>
</reference>
<sequence length="448" mass="51049">MSKDYISIIDVKNHVGEEVTIGAWVANKSGKGKIAFLQLRDGTAFFQAVAFKPNFIEKFGEEAGLEKFNTIKHLNQETAIEIKGIVKEDKRSKFGYELDATDLKVIGTSDNYPITPKEHGTDFLMDHRHLWLRSRKQMAIMQIRNAVIYASYEFFDQNGFVKFDSPILSGNAAENTTDLFETDYFGEPAFLSQSGQLYLEAGAMAFGRVFDFGPVFRAEKSKTRRHLTEFWMMDAEYPFMSHEQSLDLQEAYVKTLIQGVLDRAPQALGILERDTDLLRKYIAQPFKRVSYDDAITLLQEHEEDEDTDYEHIEHGDDFGSPHETWISNYFGIPTFVVNYPASLKAFYMKPVPGNPDRVLCADLLAPEGYGEIIGGSERETDYNTLLAKIKENGLNPDDYAFYLDLRQYGSVPHCGFGLGLERMVTFVAGTKHIREAIPFPRMLHRIEP</sequence>
<protein>
    <recommendedName>
        <fullName evidence="1">Asparagine--tRNA ligase</fullName>
        <ecNumber evidence="1">6.1.1.22</ecNumber>
    </recommendedName>
    <alternativeName>
        <fullName evidence="1">Asparaginyl-tRNA synthetase</fullName>
        <shortName evidence="1">AsnRS</shortName>
    </alternativeName>
</protein>
<name>SYN_STRMU</name>
<feature type="chain" id="PRO_0000176459" description="Asparagine--tRNA ligase">
    <location>
        <begin position="1"/>
        <end position="448"/>
    </location>
</feature>
<accession>Q8DTM2</accession>
<comment type="catalytic activity">
    <reaction evidence="1">
        <text>tRNA(Asn) + L-asparagine + ATP = L-asparaginyl-tRNA(Asn) + AMP + diphosphate + H(+)</text>
        <dbReference type="Rhea" id="RHEA:11180"/>
        <dbReference type="Rhea" id="RHEA-COMP:9659"/>
        <dbReference type="Rhea" id="RHEA-COMP:9674"/>
        <dbReference type="ChEBI" id="CHEBI:15378"/>
        <dbReference type="ChEBI" id="CHEBI:30616"/>
        <dbReference type="ChEBI" id="CHEBI:33019"/>
        <dbReference type="ChEBI" id="CHEBI:58048"/>
        <dbReference type="ChEBI" id="CHEBI:78442"/>
        <dbReference type="ChEBI" id="CHEBI:78515"/>
        <dbReference type="ChEBI" id="CHEBI:456215"/>
        <dbReference type="EC" id="6.1.1.22"/>
    </reaction>
</comment>
<comment type="subunit">
    <text evidence="1">Homodimer.</text>
</comment>
<comment type="subcellular location">
    <subcellularLocation>
        <location evidence="1">Cytoplasm</location>
    </subcellularLocation>
</comment>
<comment type="similarity">
    <text evidence="1">Belongs to the class-II aminoacyl-tRNA synthetase family.</text>
</comment>
<proteinExistence type="inferred from homology"/>
<evidence type="ECO:0000255" key="1">
    <source>
        <dbReference type="HAMAP-Rule" id="MF_00534"/>
    </source>
</evidence>